<organism>
    <name type="scientific">Shewanella sp. (strain MR-7)</name>
    <dbReference type="NCBI Taxonomy" id="60481"/>
    <lineage>
        <taxon>Bacteria</taxon>
        <taxon>Pseudomonadati</taxon>
        <taxon>Pseudomonadota</taxon>
        <taxon>Gammaproteobacteria</taxon>
        <taxon>Alteromonadales</taxon>
        <taxon>Shewanellaceae</taxon>
        <taxon>Shewanella</taxon>
    </lineage>
</organism>
<keyword id="KW-0997">Cell inner membrane</keyword>
<keyword id="KW-1003">Cell membrane</keyword>
<keyword id="KW-0472">Membrane</keyword>
<keyword id="KW-0653">Protein transport</keyword>
<keyword id="KW-0811">Translocation</keyword>
<keyword id="KW-0812">Transmembrane</keyword>
<keyword id="KW-1133">Transmembrane helix</keyword>
<keyword id="KW-0813">Transport</keyword>
<accession>Q0HZQ1</accession>
<feature type="chain" id="PRO_0000301238" description="Sec-independent protein translocase protein TatB">
    <location>
        <begin position="1"/>
        <end position="147"/>
    </location>
</feature>
<feature type="transmembrane region" description="Helical" evidence="1">
    <location>
        <begin position="2"/>
        <end position="22"/>
    </location>
</feature>
<feature type="region of interest" description="Disordered" evidence="2">
    <location>
        <begin position="68"/>
        <end position="147"/>
    </location>
</feature>
<feature type="compositionally biased region" description="Polar residues" evidence="2">
    <location>
        <begin position="71"/>
        <end position="97"/>
    </location>
</feature>
<feature type="compositionally biased region" description="Low complexity" evidence="2">
    <location>
        <begin position="112"/>
        <end position="133"/>
    </location>
</feature>
<proteinExistence type="inferred from homology"/>
<reference key="1">
    <citation type="submission" date="2006-08" db="EMBL/GenBank/DDBJ databases">
        <title>Complete sequence of chromosome 1 of Shewanella sp. MR-7.</title>
        <authorList>
            <person name="Copeland A."/>
            <person name="Lucas S."/>
            <person name="Lapidus A."/>
            <person name="Barry K."/>
            <person name="Detter J.C."/>
            <person name="Glavina del Rio T."/>
            <person name="Hammon N."/>
            <person name="Israni S."/>
            <person name="Dalin E."/>
            <person name="Tice H."/>
            <person name="Pitluck S."/>
            <person name="Kiss H."/>
            <person name="Brettin T."/>
            <person name="Bruce D."/>
            <person name="Han C."/>
            <person name="Tapia R."/>
            <person name="Gilna P."/>
            <person name="Schmutz J."/>
            <person name="Larimer F."/>
            <person name="Land M."/>
            <person name="Hauser L."/>
            <person name="Kyrpides N."/>
            <person name="Mikhailova N."/>
            <person name="Nealson K."/>
            <person name="Konstantinidis K."/>
            <person name="Klappenbach J."/>
            <person name="Tiedje J."/>
            <person name="Richardson P."/>
        </authorList>
    </citation>
    <scope>NUCLEOTIDE SEQUENCE [LARGE SCALE GENOMIC DNA]</scope>
    <source>
        <strain>MR-7</strain>
    </source>
</reference>
<dbReference type="EMBL" id="CP000444">
    <property type="protein sequence ID" value="ABI41404.1"/>
    <property type="molecule type" value="Genomic_DNA"/>
</dbReference>
<dbReference type="SMR" id="Q0HZQ1"/>
<dbReference type="KEGG" id="shm:Shewmr7_0401"/>
<dbReference type="HOGENOM" id="CLU_086034_1_0_6"/>
<dbReference type="GO" id="GO:0033281">
    <property type="term" value="C:TAT protein transport complex"/>
    <property type="evidence" value="ECO:0007669"/>
    <property type="project" value="UniProtKB-UniRule"/>
</dbReference>
<dbReference type="GO" id="GO:0008320">
    <property type="term" value="F:protein transmembrane transporter activity"/>
    <property type="evidence" value="ECO:0007669"/>
    <property type="project" value="UniProtKB-UniRule"/>
</dbReference>
<dbReference type="GO" id="GO:0043953">
    <property type="term" value="P:protein transport by the Tat complex"/>
    <property type="evidence" value="ECO:0007669"/>
    <property type="project" value="UniProtKB-UniRule"/>
</dbReference>
<dbReference type="Gene3D" id="1.20.5.3310">
    <property type="match status" value="1"/>
</dbReference>
<dbReference type="HAMAP" id="MF_00237">
    <property type="entry name" value="TatB"/>
    <property type="match status" value="1"/>
</dbReference>
<dbReference type="InterPro" id="IPR003369">
    <property type="entry name" value="TatA/B/E"/>
</dbReference>
<dbReference type="InterPro" id="IPR018448">
    <property type="entry name" value="TatB"/>
</dbReference>
<dbReference type="NCBIfam" id="TIGR01410">
    <property type="entry name" value="tatB"/>
    <property type="match status" value="1"/>
</dbReference>
<dbReference type="PANTHER" id="PTHR33162">
    <property type="entry name" value="SEC-INDEPENDENT PROTEIN TRANSLOCASE PROTEIN TATA, CHLOROPLASTIC"/>
    <property type="match status" value="1"/>
</dbReference>
<dbReference type="PANTHER" id="PTHR33162:SF1">
    <property type="entry name" value="SEC-INDEPENDENT PROTEIN TRANSLOCASE PROTEIN TATA, CHLOROPLASTIC"/>
    <property type="match status" value="1"/>
</dbReference>
<dbReference type="Pfam" id="PF02416">
    <property type="entry name" value="TatA_B_E"/>
    <property type="match status" value="1"/>
</dbReference>
<dbReference type="PRINTS" id="PR01506">
    <property type="entry name" value="TATBPROTEIN"/>
</dbReference>
<sequence>MFDGIGFMELLLIGVLGLVVLGPERLPVAVRSVTGWIRAMKRMANSVKEELEQELKIEQLHADLKKAESKGLSNLSPELQESIDQLKQAAQSVNRPYQVQDIPAQENQIHNPASQSVSSEASPTASSAPTSEPNQGEDTRSNPKANG</sequence>
<protein>
    <recommendedName>
        <fullName evidence="1">Sec-independent protein translocase protein TatB</fullName>
    </recommendedName>
</protein>
<name>TATB_SHESR</name>
<gene>
    <name evidence="1" type="primary">tatB</name>
    <name type="ordered locus">Shewmr7_0401</name>
</gene>
<evidence type="ECO:0000255" key="1">
    <source>
        <dbReference type="HAMAP-Rule" id="MF_00237"/>
    </source>
</evidence>
<evidence type="ECO:0000256" key="2">
    <source>
        <dbReference type="SAM" id="MobiDB-lite"/>
    </source>
</evidence>
<comment type="function">
    <text evidence="1">Part of the twin-arginine translocation (Tat) system that transports large folded proteins containing a characteristic twin-arginine motif in their signal peptide across membranes. Together with TatC, TatB is part of a receptor directly interacting with Tat signal peptides. TatB may form an oligomeric binding site that transiently accommodates folded Tat precursor proteins before their translocation.</text>
</comment>
<comment type="subunit">
    <text evidence="1">The Tat system comprises two distinct complexes: a TatABC complex, containing multiple copies of TatA, TatB and TatC subunits, and a separate TatA complex, containing only TatA subunits. Substrates initially bind to the TatABC complex, which probably triggers association of the separate TatA complex to form the active translocon.</text>
</comment>
<comment type="subcellular location">
    <subcellularLocation>
        <location evidence="1">Cell inner membrane</location>
        <topology evidence="1">Single-pass membrane protein</topology>
    </subcellularLocation>
</comment>
<comment type="similarity">
    <text evidence="1">Belongs to the TatB family.</text>
</comment>